<dbReference type="EMBL" id="D00941">
    <property type="protein sequence ID" value="BAA00783.1"/>
    <property type="molecule type" value="Genomic_DNA"/>
</dbReference>
<dbReference type="PIR" id="JU0363">
    <property type="entry name" value="QQCVPP"/>
</dbReference>
<dbReference type="RefSeq" id="NP_047241.1">
    <property type="nucleotide sequence ID" value="NC_001935.1"/>
</dbReference>
<dbReference type="GeneID" id="956391"/>
<dbReference type="KEGG" id="vg:956391"/>
<dbReference type="Proteomes" id="UP000006828">
    <property type="component" value="Genome"/>
</dbReference>
<dbReference type="GO" id="GO:0043657">
    <property type="term" value="C:host cell"/>
    <property type="evidence" value="ECO:0007669"/>
    <property type="project" value="InterPro"/>
</dbReference>
<dbReference type="GO" id="GO:0030430">
    <property type="term" value="C:host cell cytoplasm"/>
    <property type="evidence" value="ECO:0007669"/>
    <property type="project" value="UniProtKB-SubCell"/>
</dbReference>
<dbReference type="GO" id="GO:0042025">
    <property type="term" value="C:host cell nucleus"/>
    <property type="evidence" value="ECO:0007669"/>
    <property type="project" value="UniProtKB-SubCell"/>
</dbReference>
<dbReference type="GO" id="GO:0020002">
    <property type="term" value="C:host cell plasma membrane"/>
    <property type="evidence" value="ECO:0007669"/>
    <property type="project" value="UniProtKB-SubCell"/>
</dbReference>
<dbReference type="GO" id="GO:0016020">
    <property type="term" value="C:membrane"/>
    <property type="evidence" value="ECO:0007669"/>
    <property type="project" value="UniProtKB-KW"/>
</dbReference>
<dbReference type="GO" id="GO:0019028">
    <property type="term" value="C:viral capsid"/>
    <property type="evidence" value="ECO:0007669"/>
    <property type="project" value="InterPro"/>
</dbReference>
<dbReference type="GO" id="GO:0003697">
    <property type="term" value="F:single-stranded DNA binding"/>
    <property type="evidence" value="ECO:0007669"/>
    <property type="project" value="InterPro"/>
</dbReference>
<dbReference type="GO" id="GO:0005198">
    <property type="term" value="F:structural molecule activity"/>
    <property type="evidence" value="ECO:0007669"/>
    <property type="project" value="InterPro"/>
</dbReference>
<dbReference type="GO" id="GO:0051027">
    <property type="term" value="P:DNA transport"/>
    <property type="evidence" value="ECO:0007669"/>
    <property type="project" value="InterPro"/>
</dbReference>
<dbReference type="GO" id="GO:0046740">
    <property type="term" value="P:transport of virus in host, cell to cell"/>
    <property type="evidence" value="ECO:0007669"/>
    <property type="project" value="UniProtKB-KW"/>
</dbReference>
<dbReference type="InterPro" id="IPR001530">
    <property type="entry name" value="Gemini_BR1"/>
</dbReference>
<dbReference type="InterPro" id="IPR000263">
    <property type="entry name" value="GV_A/BR1_coat"/>
</dbReference>
<dbReference type="Pfam" id="PF00844">
    <property type="entry name" value="Gemini_coat"/>
    <property type="match status" value="1"/>
</dbReference>
<dbReference type="PRINTS" id="PR00223">
    <property type="entry name" value="GEMCOATARBR1"/>
</dbReference>
<dbReference type="PRINTS" id="PR00225">
    <property type="entry name" value="GEMCOATBR1"/>
</dbReference>
<evidence type="ECO:0000250" key="1"/>
<evidence type="ECO:0000305" key="2"/>
<organism>
    <name type="scientific">Potato yellow mosaic virus (isolate Venezuela)</name>
    <name type="common">PYMV</name>
    <dbReference type="NCBI Taxonomy" id="223310"/>
    <lineage>
        <taxon>Viruses</taxon>
        <taxon>Monodnaviria</taxon>
        <taxon>Shotokuvirae</taxon>
        <taxon>Cressdnaviricota</taxon>
        <taxon>Repensiviricetes</taxon>
        <taxon>Geplafuvirales</taxon>
        <taxon>Geminiviridae</taxon>
        <taxon>Begomovirus</taxon>
        <taxon>Potato yellow mosaic virus</taxon>
    </lineage>
</organism>
<feature type="chain" id="PRO_0000222266" description="Nuclear shuttle protein">
    <location>
        <begin position="1"/>
        <end position="256"/>
    </location>
</feature>
<feature type="region of interest" description="Interaction with Arabidopsis thaliana NSI protein" evidence="1">
    <location>
        <begin position="150"/>
        <end position="187"/>
    </location>
</feature>
<feature type="short sequence motif" description="Bipartite nuclear localization signal" evidence="1">
    <location>
        <begin position="21"/>
        <end position="42"/>
    </location>
</feature>
<feature type="short sequence motif" description="Nuclear localization signal" evidence="1">
    <location>
        <begin position="81"/>
        <end position="96"/>
    </location>
</feature>
<gene>
    <name type="ORF">BR1</name>
    <name type="ORF">BV1</name>
</gene>
<proteinExistence type="inferred from homology"/>
<organismHost>
    <name type="scientific">Solanum tuberosum</name>
    <name type="common">Potato</name>
    <dbReference type="NCBI Taxonomy" id="4113"/>
</organismHost>
<name>NSP_PYMVV</name>
<protein>
    <recommendedName>
        <fullName>Nuclear shuttle protein</fullName>
        <shortName>NSP</shortName>
    </recommendedName>
    <alternativeName>
        <fullName>Protein BR1</fullName>
    </alternativeName>
    <alternativeName>
        <fullName>Protein BV1</fullName>
    </alternativeName>
</protein>
<sequence>MYPNRHRRASFCSQPRTYPRNSLIRQQSLFKRNVSKRRPFQTVKMVDDSMMKAQRIHENQYGPDFSLAHNTAVSTFISYPDIAKSLPNRTRSYIKLKRLRFKGIVKVERVHVEVNMDCSVPKTEGVFSLVIVVDRKPHLGPSGGLPTFDELFGARIHSHGNLAIVPSLKDRFYIRHVLKRVISVEKDTMMVDIEGVVALSSRRFNCWAGFKDLDIESRKGVYDNINKNALLVYYCWMSDTVSKASTFVSFDLDYIG</sequence>
<reference key="1">
    <citation type="journal article" date="1991" name="J. Gen. Virol.">
        <title>The nucleotide sequence of the infectious cloned DNA components of potato yellow mosaic virus.</title>
        <authorList>
            <person name="Coutts R.H.A."/>
            <person name="Coffin R.S."/>
            <person name="Roberts E.J.F."/>
            <person name="Hamilton W.D.O."/>
        </authorList>
    </citation>
    <scope>NUCLEOTIDE SEQUENCE [GENOMIC DNA]</scope>
</reference>
<accession>P27268</accession>
<keyword id="KW-0238">DNA-binding</keyword>
<keyword id="KW-1032">Host cell membrane</keyword>
<keyword id="KW-1035">Host cytoplasm</keyword>
<keyword id="KW-1043">Host membrane</keyword>
<keyword id="KW-1048">Host nucleus</keyword>
<keyword id="KW-0945">Host-virus interaction</keyword>
<keyword id="KW-0472">Membrane</keyword>
<keyword id="KW-1185">Reference proteome</keyword>
<keyword id="KW-0813">Transport</keyword>
<keyword id="KW-0916">Viral movement protein</keyword>
<comment type="function">
    <text evidence="1">Binds to the genomic viral ssDNA, shuttles it into and out of the cell nucleus. Begomoviruses use 2 proteins to transport their DNA from cell to cell. The nuclear shuttle protein (NSP) shuttles it between nucleus and cytoplasm and the movement protein (MP) probably transports the DNA-NSP complex to the cell periphery and facilitates movement across the cell wall (By similarity).</text>
</comment>
<comment type="subunit">
    <text evidence="1">Binds to single-stranded and double-stranded viral DNA. Interacts with the host nuclear shuttle interacting (NSI) protein. This interaction may allow NSP to recruit NSI monomers to the viral genome and thus regulate nuclear export of viral genome by NSP (By similarity).</text>
</comment>
<comment type="subcellular location">
    <subcellularLocation>
        <location evidence="1">Host nucleus</location>
    </subcellularLocation>
    <subcellularLocation>
        <location evidence="1">Host cytoplasm</location>
    </subcellularLocation>
    <subcellularLocation>
        <location evidence="1">Host cell membrane</location>
        <topology evidence="1">Peripheral membrane protein</topology>
        <orientation evidence="1">Cytoplasmic side</orientation>
    </subcellularLocation>
    <text evidence="1">Translocated to the plasma membrane by the movement protein BC1.</text>
</comment>
<comment type="similarity">
    <text evidence="2">Belongs to the begomovirus nuclear shuttle protein family.</text>
</comment>